<comment type="PTM">
    <text evidence="1">The N-terminus is cleaved by ribosomal processing cysteine protease Prp.</text>
</comment>
<comment type="similarity">
    <text evidence="2">Belongs to the bacterial ribosomal protein bL27 family.</text>
</comment>
<keyword id="KW-1185">Reference proteome</keyword>
<keyword id="KW-0687">Ribonucleoprotein</keyword>
<keyword id="KW-0689">Ribosomal protein</keyword>
<protein>
    <recommendedName>
        <fullName evidence="2">Large ribosomal subunit protein bL27</fullName>
    </recommendedName>
    <alternativeName>
        <fullName evidence="3">50S ribosomal protein L27</fullName>
    </alternativeName>
</protein>
<name>RL27_CALS4</name>
<evidence type="ECO:0000250" key="1">
    <source>
        <dbReference type="UniProtKB" id="Q2FXT0"/>
    </source>
</evidence>
<evidence type="ECO:0000255" key="2">
    <source>
        <dbReference type="HAMAP-Rule" id="MF_00539"/>
    </source>
</evidence>
<evidence type="ECO:0000305" key="3"/>
<reference key="1">
    <citation type="journal article" date="2002" name="Genome Res.">
        <title>A complete sequence of the T. tengcongensis genome.</title>
        <authorList>
            <person name="Bao Q."/>
            <person name="Tian Y."/>
            <person name="Li W."/>
            <person name="Xu Z."/>
            <person name="Xuan Z."/>
            <person name="Hu S."/>
            <person name="Dong W."/>
            <person name="Yang J."/>
            <person name="Chen Y."/>
            <person name="Xue Y."/>
            <person name="Xu Y."/>
            <person name="Lai X."/>
            <person name="Huang L."/>
            <person name="Dong X."/>
            <person name="Ma Y."/>
            <person name="Ling L."/>
            <person name="Tan H."/>
            <person name="Chen R."/>
            <person name="Wang J."/>
            <person name="Yu J."/>
            <person name="Yang H."/>
        </authorList>
    </citation>
    <scope>NUCLEOTIDE SEQUENCE [LARGE SCALE GENOMIC DNA]</scope>
    <source>
        <strain>DSM 15242 / JCM 11007 / NBRC 100824 / MB4</strain>
    </source>
</reference>
<gene>
    <name evidence="2" type="primary">rpmA</name>
    <name type="ordered locus">TTE0915</name>
</gene>
<accession>Q8RBA7</accession>
<organism>
    <name type="scientific">Caldanaerobacter subterraneus subsp. tengcongensis (strain DSM 15242 / JCM 11007 / NBRC 100824 / MB4)</name>
    <name type="common">Thermoanaerobacter tengcongensis</name>
    <dbReference type="NCBI Taxonomy" id="273068"/>
    <lineage>
        <taxon>Bacteria</taxon>
        <taxon>Bacillati</taxon>
        <taxon>Bacillota</taxon>
        <taxon>Clostridia</taxon>
        <taxon>Thermoanaerobacterales</taxon>
        <taxon>Thermoanaerobacteraceae</taxon>
        <taxon>Caldanaerobacter</taxon>
    </lineage>
</organism>
<dbReference type="EMBL" id="AE008691">
    <property type="protein sequence ID" value="AAM24171.1"/>
    <property type="molecule type" value="Genomic_DNA"/>
</dbReference>
<dbReference type="RefSeq" id="WP_011025291.1">
    <property type="nucleotide sequence ID" value="NZ_JANUCV010000001.1"/>
</dbReference>
<dbReference type="SMR" id="Q8RBA7"/>
<dbReference type="STRING" id="273068.TTE0915"/>
<dbReference type="KEGG" id="tte:TTE0915"/>
<dbReference type="eggNOG" id="COG0211">
    <property type="taxonomic scope" value="Bacteria"/>
</dbReference>
<dbReference type="HOGENOM" id="CLU_095424_4_0_9"/>
<dbReference type="OrthoDB" id="9803474at2"/>
<dbReference type="Proteomes" id="UP000000555">
    <property type="component" value="Chromosome"/>
</dbReference>
<dbReference type="GO" id="GO:0022625">
    <property type="term" value="C:cytosolic large ribosomal subunit"/>
    <property type="evidence" value="ECO:0007669"/>
    <property type="project" value="TreeGrafter"/>
</dbReference>
<dbReference type="GO" id="GO:0003735">
    <property type="term" value="F:structural constituent of ribosome"/>
    <property type="evidence" value="ECO:0007669"/>
    <property type="project" value="InterPro"/>
</dbReference>
<dbReference type="GO" id="GO:0006412">
    <property type="term" value="P:translation"/>
    <property type="evidence" value="ECO:0007669"/>
    <property type="project" value="UniProtKB-UniRule"/>
</dbReference>
<dbReference type="FunFam" id="2.40.50.100:FF:000004">
    <property type="entry name" value="50S ribosomal protein L27"/>
    <property type="match status" value="1"/>
</dbReference>
<dbReference type="Gene3D" id="2.40.50.100">
    <property type="match status" value="1"/>
</dbReference>
<dbReference type="HAMAP" id="MF_00539">
    <property type="entry name" value="Ribosomal_bL27"/>
    <property type="match status" value="1"/>
</dbReference>
<dbReference type="InterPro" id="IPR001684">
    <property type="entry name" value="Ribosomal_bL27"/>
</dbReference>
<dbReference type="InterPro" id="IPR018261">
    <property type="entry name" value="Ribosomal_bL27_CS"/>
</dbReference>
<dbReference type="NCBIfam" id="TIGR00062">
    <property type="entry name" value="L27"/>
    <property type="match status" value="1"/>
</dbReference>
<dbReference type="PANTHER" id="PTHR15893:SF0">
    <property type="entry name" value="LARGE RIBOSOMAL SUBUNIT PROTEIN BL27M"/>
    <property type="match status" value="1"/>
</dbReference>
<dbReference type="PANTHER" id="PTHR15893">
    <property type="entry name" value="RIBOSOMAL PROTEIN L27"/>
    <property type="match status" value="1"/>
</dbReference>
<dbReference type="Pfam" id="PF01016">
    <property type="entry name" value="Ribosomal_L27"/>
    <property type="match status" value="1"/>
</dbReference>
<dbReference type="PRINTS" id="PR00063">
    <property type="entry name" value="RIBOSOMALL27"/>
</dbReference>
<dbReference type="SUPFAM" id="SSF110324">
    <property type="entry name" value="Ribosomal L27 protein-like"/>
    <property type="match status" value="1"/>
</dbReference>
<dbReference type="PROSITE" id="PS00831">
    <property type="entry name" value="RIBOSOMAL_L27"/>
    <property type="match status" value="1"/>
</dbReference>
<proteinExistence type="inferred from homology"/>
<sequence length="95" mass="10482">MILQLFAHKKGVGSSRNGRDSESKRLGVKRSDGQFVLAGNILVRQRGTKIHPGANVGIGKDDTLFALIDGYVVFERKGRDKKQVSVYPERKVAQS</sequence>
<feature type="propeptide" id="PRO_0000459976" evidence="1">
    <location>
        <begin position="1"/>
        <end position="6"/>
    </location>
</feature>
<feature type="chain" id="PRO_0000181195" description="Large ribosomal subunit protein bL27">
    <location>
        <begin position="7"/>
        <end position="95"/>
    </location>
</feature>